<accession>A3U3H1</accession>
<evidence type="ECO:0000250" key="1"/>
<evidence type="ECO:0000255" key="2"/>
<evidence type="ECO:0000269" key="3">
    <source>
    </source>
</evidence>
<evidence type="ECO:0000303" key="4">
    <source>
    </source>
</evidence>
<evidence type="ECO:0000305" key="5"/>
<keyword id="KW-0274">FAD</keyword>
<keyword id="KW-0285">Flavoprotein</keyword>
<keyword id="KW-0503">Monooxygenase</keyword>
<keyword id="KW-0521">NADP</keyword>
<keyword id="KW-0560">Oxidoreductase</keyword>
<keyword id="KW-1185">Reference proteome</keyword>
<reference key="1">
    <citation type="journal article" date="2010" name="J. Bacteriol.">
        <title>Genome sequences of Oceanicola granulosus HTCC2516(T) and Oceanicola batsensis HTCC2597(TDelta).</title>
        <authorList>
            <person name="Thrash J.C."/>
            <person name="Cho J.C."/>
            <person name="Vergin K.L."/>
            <person name="Giovannoni S.J."/>
        </authorList>
    </citation>
    <scope>NUCLEOTIDE SEQUENCE [LARGE SCALE GENOMIC DNA]</scope>
    <source>
        <strain>ATCC BAA-863 / DSM 15984 / KCTC 12145 / HTCC2597</strain>
    </source>
</reference>
<reference key="2">
    <citation type="journal article" date="2014" name="Chem. Commun. (Camb.)">
        <title>Broadening the scope of Baeyer-Villiger monooxygenase activities toward alpha,beta-unsaturated ketones: a promising route to chiral enol-lactones and ene-lactones.</title>
        <authorList>
            <person name="Reignier T."/>
            <person name="de Berardinis V."/>
            <person name="Petit J.L."/>
            <person name="Mariage A."/>
            <person name="Hamze K."/>
            <person name="Duquesne K."/>
            <person name="Alphand V."/>
        </authorList>
    </citation>
    <scope>FUNCTION</scope>
    <scope>CATALYTIC ACTIVITY</scope>
    <scope>SUBSTRATE SPECIFICITY</scope>
    <scope>COFACTOR</scope>
    <scope>BIOTECHNOLOGY</scope>
    <source>
        <strain>ATCC BAA-863 / DSM 15984 / KCTC 12145 / HTCC2597</strain>
    </source>
</reference>
<comment type="function">
    <text evidence="3">Catalyzes a Baeyer-Villiger oxidation reaction, i.e. the insertion of an oxygen atom into a carbon-carbon bond adjacent to a carbonyl, which converts ketones to esters or lactones using NADPH as an electron donor. Besides cycloalkanones, can use cyclic alpha,beta-unsaturated ketones as substrates, leading to conjugated ene-lactones. Can also act on methylated cycloalkanones and methylated cycloalkenones with high enantioselectivity in some cases.</text>
</comment>
<comment type="cofactor">
    <cofactor evidence="3">
        <name>FAD</name>
        <dbReference type="ChEBI" id="CHEBI:57692"/>
    </cofactor>
</comment>
<comment type="biotechnology">
    <text evidence="3">This enzyme offers a promising route for the synthesis of chiral ene-lactones, when expressed in an engineered strain deprived of enone reductase activity.</text>
</comment>
<comment type="miscellaneous">
    <text>Displays a different regioselectivity from P.lavamentivorans BVMO.</text>
</comment>
<comment type="similarity">
    <text evidence="5">Belongs to the FAD-binding monooxygenase family.</text>
</comment>
<feature type="chain" id="PRO_0000430340" description="Baeyer-Villiger monooxygenase">
    <location>
        <begin position="1"/>
        <end position="545"/>
    </location>
</feature>
<feature type="binding site" evidence="1">
    <location>
        <position position="24"/>
    </location>
    <ligand>
        <name>FAD</name>
        <dbReference type="ChEBI" id="CHEBI:57692"/>
    </ligand>
</feature>
<feature type="binding site" evidence="1">
    <location>
        <position position="45"/>
    </location>
    <ligand>
        <name>FAD</name>
        <dbReference type="ChEBI" id="CHEBI:57692"/>
    </ligand>
</feature>
<feature type="binding site" evidence="1">
    <location>
        <position position="54"/>
    </location>
    <ligand>
        <name>FAD</name>
        <dbReference type="ChEBI" id="CHEBI:57692"/>
    </ligand>
</feature>
<feature type="binding site" evidence="1">
    <location>
        <position position="65"/>
    </location>
    <ligand>
        <name>FAD</name>
        <dbReference type="ChEBI" id="CHEBI:57692"/>
    </ligand>
</feature>
<feature type="binding site" evidence="1">
    <location>
        <position position="71"/>
    </location>
    <ligand>
        <name>FAD</name>
        <dbReference type="ChEBI" id="CHEBI:57692"/>
    </ligand>
</feature>
<feature type="binding site" evidence="1">
    <location>
        <position position="118"/>
    </location>
    <ligand>
        <name>FAD</name>
        <dbReference type="ChEBI" id="CHEBI:57692"/>
    </ligand>
</feature>
<feature type="site" description="Transition state stabilizer" evidence="2">
    <location>
        <position position="335"/>
    </location>
</feature>
<proteinExistence type="evidence at protein level"/>
<name>BVMO_PSEBH</name>
<sequence>MNIQTENTKTVGADFDAVVIGAGFGGLYAVHKLRNEQGLNVRGYDSASDVGGTWWWNRYPGALSDTESYVYRYSFDKELLRKGRWKTRYLTQPEILEYMNEVADHLDLRRSYKFDTKVDGAHYNEKTGLWNVITDSGETVTAKYLVTGLGLLSATNVPKFKGIDDFKGRILHTGAWPEGVDLSNKRVGIIGTGSTGVQVITATAPIAKHLTVFQRSAQYVVPIGNTPQDDATIAEQKANYDNIWNQVKNSVVAFGFEESAEPAETASPEERERVFEAAWQRGGGFYFMFGTFCDIATSQVANDAAADFIKGKIKQIVKDPKVAEKLTPKDLYAKRPLCGNNYYEVYNRDNVTLADVKADPIAEFTPNGIRLESGEEHELDIVIFATGFDAVDGNYVKMDLRGRGGVTMRDTWKEGPLGYLGMMEVDFPNFFMILGPNGPFTNLPPSIETQVEWIADTICAMEEEGVQSVEPTVEARDAWVGTCREIADMTLFPKAESWIFGANIPGKKNAVMFYMAGIGNYRNAISAVKEEGYTSLIRDRTAEKV</sequence>
<dbReference type="EC" id="1.14.13.-" evidence="3"/>
<dbReference type="EMBL" id="AAMO01000015">
    <property type="protein sequence ID" value="EAQ01307.1"/>
    <property type="molecule type" value="Genomic_DNA"/>
</dbReference>
<dbReference type="RefSeq" id="WP_009804217.1">
    <property type="nucleotide sequence ID" value="NZ_AAMO01000015.1"/>
</dbReference>
<dbReference type="SMR" id="A3U3H1"/>
<dbReference type="STRING" id="252305.OB2597_18631"/>
<dbReference type="HOGENOM" id="CLU_006937_8_1_5"/>
<dbReference type="OrthoDB" id="312624at2"/>
<dbReference type="Proteomes" id="UP000004318">
    <property type="component" value="Unassembled WGS sequence"/>
</dbReference>
<dbReference type="GO" id="GO:0050660">
    <property type="term" value="F:flavin adenine dinucleotide binding"/>
    <property type="evidence" value="ECO:0007669"/>
    <property type="project" value="InterPro"/>
</dbReference>
<dbReference type="GO" id="GO:0004499">
    <property type="term" value="F:N,N-dimethylaniline monooxygenase activity"/>
    <property type="evidence" value="ECO:0007669"/>
    <property type="project" value="InterPro"/>
</dbReference>
<dbReference type="GO" id="GO:0050661">
    <property type="term" value="F:NADP binding"/>
    <property type="evidence" value="ECO:0007669"/>
    <property type="project" value="InterPro"/>
</dbReference>
<dbReference type="Gene3D" id="3.50.50.60">
    <property type="entry name" value="FAD/NAD(P)-binding domain"/>
    <property type="match status" value="2"/>
</dbReference>
<dbReference type="InterPro" id="IPR050775">
    <property type="entry name" value="FAD-binding_Monooxygenases"/>
</dbReference>
<dbReference type="InterPro" id="IPR036188">
    <property type="entry name" value="FAD/NAD-bd_sf"/>
</dbReference>
<dbReference type="InterPro" id="IPR020946">
    <property type="entry name" value="Flavin_mOase-like"/>
</dbReference>
<dbReference type="PANTHER" id="PTHR43098:SF5">
    <property type="entry name" value="DUAL-FUNCTIONAL MONOOXYGENASE_METHYLTRANSFERASE PSOF"/>
    <property type="match status" value="1"/>
</dbReference>
<dbReference type="PANTHER" id="PTHR43098">
    <property type="entry name" value="L-ORNITHINE N(5)-MONOOXYGENASE-RELATED"/>
    <property type="match status" value="1"/>
</dbReference>
<dbReference type="Pfam" id="PF00743">
    <property type="entry name" value="FMO-like"/>
    <property type="match status" value="1"/>
</dbReference>
<dbReference type="SUPFAM" id="SSF51905">
    <property type="entry name" value="FAD/NAD(P)-binding domain"/>
    <property type="match status" value="2"/>
</dbReference>
<organism>
    <name type="scientific">Pseudooceanicola batsensis (strain ATCC BAA-863 / DSM 15984 / KCTC 12145 / HTCC2597)</name>
    <name type="common">Oceanicola batsensis</name>
    <dbReference type="NCBI Taxonomy" id="252305"/>
    <lineage>
        <taxon>Bacteria</taxon>
        <taxon>Pseudomonadati</taxon>
        <taxon>Pseudomonadota</taxon>
        <taxon>Alphaproteobacteria</taxon>
        <taxon>Rhodobacterales</taxon>
        <taxon>Paracoccaceae</taxon>
        <taxon>Pseudooceanicola</taxon>
    </lineage>
</organism>
<gene>
    <name type="ORF">OB2597_18631</name>
</gene>
<protein>
    <recommendedName>
        <fullName evidence="4">Baeyer-Villiger monooxygenase</fullName>
        <shortName evidence="5">BVMO</shortName>
        <ecNumber evidence="3">1.14.13.-</ecNumber>
    </recommendedName>
</protein>